<gene>
    <name type="primary">AGD14</name>
    <name type="synonym">ZIG4</name>
    <name type="synonym">ZIGA4</name>
    <name type="ordered locus">At1g08680/At1g08690</name>
    <name type="ORF">F22O13.16/F22O13.17</name>
</gene>
<comment type="function">
    <text evidence="1">GTPase-activating protein (GAP) for ADP ribosylation factor (ARF).</text>
</comment>
<comment type="alternative products">
    <event type="alternative splicing"/>
    <isoform>
        <id>Q8RXE7-1</id>
        <name>1</name>
        <sequence type="displayed"/>
    </isoform>
    <isoform>
        <id>Q8RXE7-2</id>
        <name>2</name>
        <sequence type="described" ref="VSP_035554"/>
    </isoform>
    <isoform>
        <id>Q8RXE7-3</id>
        <name>3</name>
        <sequence type="described" ref="VSP_035553"/>
    </isoform>
</comment>
<comment type="miscellaneous">
    <molecule>Isoform 2</molecule>
    <text evidence="6">May be due to a competing acceptor splice site.</text>
</comment>
<comment type="sequence caution" evidence="6">
    <conflict type="erroneous gene model prediction">
        <sequence resource="EMBL-CDS" id="AAF99759"/>
    </conflict>
    <text>Was originally thought to correspond to two different genes At1g08680 and At1g08690.</text>
</comment>
<comment type="sequence caution" evidence="6">
    <conflict type="erroneous gene model prediction">
        <sequence resource="EMBL-CDS" id="AAF99760"/>
    </conflict>
    <text>Was originally thought to correspond to two different genes At1g08680 and At1g08690.</text>
</comment>
<proteinExistence type="evidence at protein level"/>
<name>AGD14_ARATH</name>
<evidence type="ECO:0000250" key="1"/>
<evidence type="ECO:0000255" key="2">
    <source>
        <dbReference type="PROSITE-ProRule" id="PRU00288"/>
    </source>
</evidence>
<evidence type="ECO:0000256" key="3">
    <source>
        <dbReference type="SAM" id="MobiDB-lite"/>
    </source>
</evidence>
<evidence type="ECO:0000303" key="4">
    <source>
    </source>
</evidence>
<evidence type="ECO:0000303" key="5">
    <source ref="5"/>
</evidence>
<evidence type="ECO:0000305" key="6"/>
<organism>
    <name type="scientific">Arabidopsis thaliana</name>
    <name type="common">Mouse-ear cress</name>
    <dbReference type="NCBI Taxonomy" id="3702"/>
    <lineage>
        <taxon>Eukaryota</taxon>
        <taxon>Viridiplantae</taxon>
        <taxon>Streptophyta</taxon>
        <taxon>Embryophyta</taxon>
        <taxon>Tracheophyta</taxon>
        <taxon>Spermatophyta</taxon>
        <taxon>Magnoliopsida</taxon>
        <taxon>eudicotyledons</taxon>
        <taxon>Gunneridae</taxon>
        <taxon>Pentapetalae</taxon>
        <taxon>rosids</taxon>
        <taxon>malvids</taxon>
        <taxon>Brassicales</taxon>
        <taxon>Brassicaceae</taxon>
        <taxon>Camelineae</taxon>
        <taxon>Arabidopsis</taxon>
    </lineage>
</organism>
<reference key="1">
    <citation type="journal article" date="2000" name="Plant Mol. Biol.">
        <title>Promiscuous and specific phospholipid binding by domains in ZAC, a membrane-associated Arabidopsis protein with an ARF GAP zinc finger and a C2 domain.</title>
        <authorList>
            <person name="Jensen R.B."/>
            <person name="Lykke-Andersen K."/>
            <person name="Frandsen G.I."/>
            <person name="Nielsen H.B."/>
            <person name="Haseloff J."/>
            <person name="Jespersen H.M."/>
            <person name="Mundy J."/>
            <person name="Skriver K."/>
        </authorList>
    </citation>
    <scope>NUCLEOTIDE SEQUENCE [MRNA] (ISOFORM 1)</scope>
    <source>
        <strain>cv. Columbia</strain>
    </source>
</reference>
<reference key="2">
    <citation type="journal article" date="2000" name="Nature">
        <title>Sequence and analysis of chromosome 1 of the plant Arabidopsis thaliana.</title>
        <authorList>
            <person name="Theologis A."/>
            <person name="Ecker J.R."/>
            <person name="Palm C.J."/>
            <person name="Federspiel N.A."/>
            <person name="Kaul S."/>
            <person name="White O."/>
            <person name="Alonso J."/>
            <person name="Altafi H."/>
            <person name="Araujo R."/>
            <person name="Bowman C.L."/>
            <person name="Brooks S.Y."/>
            <person name="Buehler E."/>
            <person name="Chan A."/>
            <person name="Chao Q."/>
            <person name="Chen H."/>
            <person name="Cheuk R.F."/>
            <person name="Chin C.W."/>
            <person name="Chung M.K."/>
            <person name="Conn L."/>
            <person name="Conway A.B."/>
            <person name="Conway A.R."/>
            <person name="Creasy T.H."/>
            <person name="Dewar K."/>
            <person name="Dunn P."/>
            <person name="Etgu P."/>
            <person name="Feldblyum T.V."/>
            <person name="Feng J.-D."/>
            <person name="Fong B."/>
            <person name="Fujii C.Y."/>
            <person name="Gill J.E."/>
            <person name="Goldsmith A.D."/>
            <person name="Haas B."/>
            <person name="Hansen N.F."/>
            <person name="Hughes B."/>
            <person name="Huizar L."/>
            <person name="Hunter J.L."/>
            <person name="Jenkins J."/>
            <person name="Johnson-Hopson C."/>
            <person name="Khan S."/>
            <person name="Khaykin E."/>
            <person name="Kim C.J."/>
            <person name="Koo H.L."/>
            <person name="Kremenetskaia I."/>
            <person name="Kurtz D.B."/>
            <person name="Kwan A."/>
            <person name="Lam B."/>
            <person name="Langin-Hooper S."/>
            <person name="Lee A."/>
            <person name="Lee J.M."/>
            <person name="Lenz C.A."/>
            <person name="Li J.H."/>
            <person name="Li Y.-P."/>
            <person name="Lin X."/>
            <person name="Liu S.X."/>
            <person name="Liu Z.A."/>
            <person name="Luros J.S."/>
            <person name="Maiti R."/>
            <person name="Marziali A."/>
            <person name="Militscher J."/>
            <person name="Miranda M."/>
            <person name="Nguyen M."/>
            <person name="Nierman W.C."/>
            <person name="Osborne B.I."/>
            <person name="Pai G."/>
            <person name="Peterson J."/>
            <person name="Pham P.K."/>
            <person name="Rizzo M."/>
            <person name="Rooney T."/>
            <person name="Rowley D."/>
            <person name="Sakano H."/>
            <person name="Salzberg S.L."/>
            <person name="Schwartz J.R."/>
            <person name="Shinn P."/>
            <person name="Southwick A.M."/>
            <person name="Sun H."/>
            <person name="Tallon L.J."/>
            <person name="Tambunga G."/>
            <person name="Toriumi M.J."/>
            <person name="Town C.D."/>
            <person name="Utterback T."/>
            <person name="Van Aken S."/>
            <person name="Vaysberg M."/>
            <person name="Vysotskaia V.S."/>
            <person name="Walker M."/>
            <person name="Wu D."/>
            <person name="Yu G."/>
            <person name="Fraser C.M."/>
            <person name="Venter J.C."/>
            <person name="Davis R.W."/>
        </authorList>
    </citation>
    <scope>NUCLEOTIDE SEQUENCE [LARGE SCALE GENOMIC DNA]</scope>
    <source>
        <strain>cv. Columbia</strain>
    </source>
</reference>
<reference key="3">
    <citation type="journal article" date="2017" name="Plant J.">
        <title>Araport11: a complete reannotation of the Arabidopsis thaliana reference genome.</title>
        <authorList>
            <person name="Cheng C.Y."/>
            <person name="Krishnakumar V."/>
            <person name="Chan A.P."/>
            <person name="Thibaud-Nissen F."/>
            <person name="Schobel S."/>
            <person name="Town C.D."/>
        </authorList>
    </citation>
    <scope>GENOME REANNOTATION</scope>
    <source>
        <strain>cv. Columbia</strain>
    </source>
</reference>
<reference key="4">
    <citation type="journal article" date="2003" name="Science">
        <title>Empirical analysis of transcriptional activity in the Arabidopsis genome.</title>
        <authorList>
            <person name="Yamada K."/>
            <person name="Lim J."/>
            <person name="Dale J.M."/>
            <person name="Chen H."/>
            <person name="Shinn P."/>
            <person name="Palm C.J."/>
            <person name="Southwick A.M."/>
            <person name="Wu H.C."/>
            <person name="Kim C.J."/>
            <person name="Nguyen M."/>
            <person name="Pham P.K."/>
            <person name="Cheuk R.F."/>
            <person name="Karlin-Newmann G."/>
            <person name="Liu S.X."/>
            <person name="Lam B."/>
            <person name="Sakano H."/>
            <person name="Wu T."/>
            <person name="Yu G."/>
            <person name="Miranda M."/>
            <person name="Quach H.L."/>
            <person name="Tripp M."/>
            <person name="Chang C.H."/>
            <person name="Lee J.M."/>
            <person name="Toriumi M.J."/>
            <person name="Chan M.M."/>
            <person name="Tang C.C."/>
            <person name="Onodera C.S."/>
            <person name="Deng J.M."/>
            <person name="Akiyama K."/>
            <person name="Ansari Y."/>
            <person name="Arakawa T."/>
            <person name="Banh J."/>
            <person name="Banno F."/>
            <person name="Bowser L."/>
            <person name="Brooks S.Y."/>
            <person name="Carninci P."/>
            <person name="Chao Q."/>
            <person name="Choy N."/>
            <person name="Enju A."/>
            <person name="Goldsmith A.D."/>
            <person name="Gurjal M."/>
            <person name="Hansen N.F."/>
            <person name="Hayashizaki Y."/>
            <person name="Johnson-Hopson C."/>
            <person name="Hsuan V.W."/>
            <person name="Iida K."/>
            <person name="Karnes M."/>
            <person name="Khan S."/>
            <person name="Koesema E."/>
            <person name="Ishida J."/>
            <person name="Jiang P.X."/>
            <person name="Jones T."/>
            <person name="Kawai J."/>
            <person name="Kamiya A."/>
            <person name="Meyers C."/>
            <person name="Nakajima M."/>
            <person name="Narusaka M."/>
            <person name="Seki M."/>
            <person name="Sakurai T."/>
            <person name="Satou M."/>
            <person name="Tamse R."/>
            <person name="Vaysberg M."/>
            <person name="Wallender E.K."/>
            <person name="Wong C."/>
            <person name="Yamamura Y."/>
            <person name="Yuan S."/>
            <person name="Shinozaki K."/>
            <person name="Davis R.W."/>
            <person name="Theologis A."/>
            <person name="Ecker J.R."/>
        </authorList>
    </citation>
    <scope>NUCLEOTIDE SEQUENCE [LARGE SCALE MRNA] (ISOFORM 2)</scope>
    <source>
        <strain>cv. Columbia</strain>
    </source>
</reference>
<reference key="5">
    <citation type="submission" date="2004-09" db="EMBL/GenBank/DDBJ databases">
        <title>Large-scale analysis of RIKEN Arabidopsis full-length (RAFL) cDNAs.</title>
        <authorList>
            <person name="Totoki Y."/>
            <person name="Seki M."/>
            <person name="Ishida J."/>
            <person name="Nakajima M."/>
            <person name="Enju A."/>
            <person name="Kamiya A."/>
            <person name="Narusaka M."/>
            <person name="Shin-i T."/>
            <person name="Nakagawa M."/>
            <person name="Sakamoto N."/>
            <person name="Oishi K."/>
            <person name="Kohara Y."/>
            <person name="Kobayashi M."/>
            <person name="Toyoda A."/>
            <person name="Sakaki Y."/>
            <person name="Sakurai T."/>
            <person name="Iida K."/>
            <person name="Akiyama K."/>
            <person name="Satou M."/>
            <person name="Toyoda T."/>
            <person name="Konagaya A."/>
            <person name="Carninci P."/>
            <person name="Kawai J."/>
            <person name="Hayashizaki Y."/>
            <person name="Shinozaki K."/>
        </authorList>
    </citation>
    <scope>NUCLEOTIDE SEQUENCE [LARGE SCALE MRNA] (ISOFORM 3)</scope>
    <source>
        <strain>cv. Columbia</strain>
    </source>
</reference>
<reference key="6">
    <citation type="journal article" date="2003" name="Plant Physiol.">
        <title>Analysis of the small GTPase gene superfamily of Arabidopsis.</title>
        <authorList>
            <person name="Vernoud V."/>
            <person name="Horton A.C."/>
            <person name="Yang Z."/>
            <person name="Nielsen E."/>
        </authorList>
    </citation>
    <scope>GENE FAMILY</scope>
    <scope>NOMENCLATURE</scope>
</reference>
<reference key="7">
    <citation type="journal article" date="2009" name="J. Proteomics">
        <title>Phosphoproteomic analysis of nuclei-enriched fractions from Arabidopsis thaliana.</title>
        <authorList>
            <person name="Jones A.M.E."/>
            <person name="MacLean D."/>
            <person name="Studholme D.J."/>
            <person name="Serna-Sanz A."/>
            <person name="Andreasson E."/>
            <person name="Rathjen J.P."/>
            <person name="Peck S.C."/>
        </authorList>
    </citation>
    <scope>IDENTIFICATION BY MASS SPECTROMETRY [LARGE SCALE ANALYSIS]</scope>
    <source>
        <strain>cv. Columbia</strain>
    </source>
</reference>
<reference key="8">
    <citation type="journal article" date="2009" name="Plant Physiol.">
        <title>Large-scale Arabidopsis phosphoproteome profiling reveals novel chloroplast kinase substrates and phosphorylation networks.</title>
        <authorList>
            <person name="Reiland S."/>
            <person name="Messerli G."/>
            <person name="Baerenfaller K."/>
            <person name="Gerrits B."/>
            <person name="Endler A."/>
            <person name="Grossmann J."/>
            <person name="Gruissem W."/>
            <person name="Baginsky S."/>
        </authorList>
    </citation>
    <scope>IDENTIFICATION BY MASS SPECTROMETRY [LARGE SCALE ANALYSIS]</scope>
</reference>
<dbReference type="EMBL" id="AF184145">
    <property type="protein sequence ID" value="AAG17005.1"/>
    <property type="molecule type" value="mRNA"/>
</dbReference>
<dbReference type="EMBL" id="AC003981">
    <property type="protein sequence ID" value="AAF99759.1"/>
    <property type="status" value="ALT_SEQ"/>
    <property type="molecule type" value="Genomic_DNA"/>
</dbReference>
<dbReference type="EMBL" id="AC003981">
    <property type="protein sequence ID" value="AAF99760.1"/>
    <property type="status" value="ALT_SEQ"/>
    <property type="molecule type" value="Genomic_DNA"/>
</dbReference>
<dbReference type="EMBL" id="CP002684">
    <property type="protein sequence ID" value="AEE28331.1"/>
    <property type="molecule type" value="Genomic_DNA"/>
</dbReference>
<dbReference type="EMBL" id="CP002684">
    <property type="protein sequence ID" value="AEE28332.1"/>
    <property type="molecule type" value="Genomic_DNA"/>
</dbReference>
<dbReference type="EMBL" id="CP002684">
    <property type="protein sequence ID" value="AEE28333.1"/>
    <property type="molecule type" value="Genomic_DNA"/>
</dbReference>
<dbReference type="EMBL" id="AY081303">
    <property type="protein sequence ID" value="AAL91192.1"/>
    <property type="molecule type" value="mRNA"/>
</dbReference>
<dbReference type="EMBL" id="BT008398">
    <property type="protein sequence ID" value="AAP37757.1"/>
    <property type="molecule type" value="mRNA"/>
</dbReference>
<dbReference type="EMBL" id="AK176415">
    <property type="protein sequence ID" value="BAD44178.1"/>
    <property type="molecule type" value="mRNA"/>
</dbReference>
<dbReference type="PIR" id="T00722">
    <property type="entry name" value="T00722"/>
</dbReference>
<dbReference type="PIR" id="T00723">
    <property type="entry name" value="T00723"/>
</dbReference>
<dbReference type="RefSeq" id="NP_001031002.1">
    <molecule id="Q8RXE7-3"/>
    <property type="nucleotide sequence ID" value="NM_001035925.2"/>
</dbReference>
<dbReference type="RefSeq" id="NP_172344.2">
    <molecule id="Q8RXE7-2"/>
    <property type="nucleotide sequence ID" value="NM_100741.4"/>
</dbReference>
<dbReference type="RefSeq" id="NP_850941.1">
    <molecule id="Q8RXE7-1"/>
    <property type="nucleotide sequence ID" value="NM_180610.4"/>
</dbReference>
<dbReference type="SMR" id="Q8RXE7"/>
<dbReference type="BioGRID" id="22631">
    <property type="interactions" value="1"/>
</dbReference>
<dbReference type="FunCoup" id="Q8RXE7">
    <property type="interactions" value="1391"/>
</dbReference>
<dbReference type="STRING" id="3702.Q8RXE7"/>
<dbReference type="GlyGen" id="Q8RXE7">
    <property type="glycosylation" value="2 sites, 1 O-linked glycan (2 sites)"/>
</dbReference>
<dbReference type="iPTMnet" id="Q8RXE7"/>
<dbReference type="PaxDb" id="3702-AT1G08680.4"/>
<dbReference type="EnsemblPlants" id="AT1G08680.1">
    <molecule id="Q8RXE7-1"/>
    <property type="protein sequence ID" value="AT1G08680.1"/>
    <property type="gene ID" value="AT1G08680"/>
</dbReference>
<dbReference type="EnsemblPlants" id="AT1G08680.2">
    <molecule id="Q8RXE7-2"/>
    <property type="protein sequence ID" value="AT1G08680.2"/>
    <property type="gene ID" value="AT1G08680"/>
</dbReference>
<dbReference type="EnsemblPlants" id="AT1G08680.3">
    <molecule id="Q8RXE7-3"/>
    <property type="protein sequence ID" value="AT1G08680.3"/>
    <property type="gene ID" value="AT1G08680"/>
</dbReference>
<dbReference type="GeneID" id="837390"/>
<dbReference type="Gramene" id="AT1G08680.1">
    <molecule id="Q8RXE7-1"/>
    <property type="protein sequence ID" value="AT1G08680.1"/>
    <property type="gene ID" value="AT1G08680"/>
</dbReference>
<dbReference type="Gramene" id="AT1G08680.2">
    <molecule id="Q8RXE7-2"/>
    <property type="protein sequence ID" value="AT1G08680.2"/>
    <property type="gene ID" value="AT1G08680"/>
</dbReference>
<dbReference type="Gramene" id="AT1G08680.3">
    <molecule id="Q8RXE7-3"/>
    <property type="protein sequence ID" value="AT1G08680.3"/>
    <property type="gene ID" value="AT1G08680"/>
</dbReference>
<dbReference type="KEGG" id="ath:AT1G08680"/>
<dbReference type="Araport" id="AT1G08680"/>
<dbReference type="TAIR" id="AT1G08680">
    <property type="gene designation" value="ZIGA4"/>
</dbReference>
<dbReference type="eggNOG" id="KOG0702">
    <property type="taxonomic scope" value="Eukaryota"/>
</dbReference>
<dbReference type="HOGENOM" id="CLU_009449_1_0_1"/>
<dbReference type="InParanoid" id="Q8RXE7"/>
<dbReference type="OMA" id="THHQMIN"/>
<dbReference type="PhylomeDB" id="Q8RXE7"/>
<dbReference type="PRO" id="PR:Q8RXE7"/>
<dbReference type="Proteomes" id="UP000006548">
    <property type="component" value="Chromosome 1"/>
</dbReference>
<dbReference type="ExpressionAtlas" id="Q8RXE7">
    <property type="expression patterns" value="baseline and differential"/>
</dbReference>
<dbReference type="GO" id="GO:0005096">
    <property type="term" value="F:GTPase activator activity"/>
    <property type="evidence" value="ECO:0007669"/>
    <property type="project" value="UniProtKB-KW"/>
</dbReference>
<dbReference type="GO" id="GO:0008270">
    <property type="term" value="F:zinc ion binding"/>
    <property type="evidence" value="ECO:0007669"/>
    <property type="project" value="UniProtKB-KW"/>
</dbReference>
<dbReference type="CDD" id="cd08838">
    <property type="entry name" value="ArfGap_AGFG"/>
    <property type="match status" value="1"/>
</dbReference>
<dbReference type="FunFam" id="1.10.220.150:FF:000005">
    <property type="entry name" value="Arf-GAP domain and FG repeat-containing protein 1"/>
    <property type="match status" value="1"/>
</dbReference>
<dbReference type="Gene3D" id="1.10.220.150">
    <property type="entry name" value="Arf GTPase activating protein"/>
    <property type="match status" value="1"/>
</dbReference>
<dbReference type="InterPro" id="IPR044820">
    <property type="entry name" value="AGD14-like"/>
</dbReference>
<dbReference type="InterPro" id="IPR037278">
    <property type="entry name" value="ARFGAP/RecO"/>
</dbReference>
<dbReference type="InterPro" id="IPR001164">
    <property type="entry name" value="ArfGAP_dom"/>
</dbReference>
<dbReference type="InterPro" id="IPR038508">
    <property type="entry name" value="ArfGAP_dom_sf"/>
</dbReference>
<dbReference type="PANTHER" id="PTHR46085:SF4">
    <property type="entry name" value="ADP-RIBOSYLATION FACTOR GTPASE-ACTIVATING PROTEIN AGD14-RELATED"/>
    <property type="match status" value="1"/>
</dbReference>
<dbReference type="PANTHER" id="PTHR46085">
    <property type="entry name" value="ARFGAP/RECO-RELATED"/>
    <property type="match status" value="1"/>
</dbReference>
<dbReference type="Pfam" id="PF01412">
    <property type="entry name" value="ArfGap"/>
    <property type="match status" value="1"/>
</dbReference>
<dbReference type="PRINTS" id="PR00405">
    <property type="entry name" value="REVINTRACTNG"/>
</dbReference>
<dbReference type="SMART" id="SM00105">
    <property type="entry name" value="ArfGap"/>
    <property type="match status" value="1"/>
</dbReference>
<dbReference type="SUPFAM" id="SSF57863">
    <property type="entry name" value="ArfGap/RecO-like zinc finger"/>
    <property type="match status" value="1"/>
</dbReference>
<dbReference type="PROSITE" id="PS50115">
    <property type="entry name" value="ARFGAP"/>
    <property type="match status" value="1"/>
</dbReference>
<feature type="chain" id="PRO_0000352505" description="Probable ADP-ribosylation factor GTPase-activating protein AGD14">
    <location>
        <begin position="1"/>
        <end position="649"/>
    </location>
</feature>
<feature type="domain" description="Arf-GAP" evidence="2">
    <location>
        <begin position="12"/>
        <end position="130"/>
    </location>
</feature>
<feature type="zinc finger region" description="C4-type" evidence="2">
    <location>
        <begin position="27"/>
        <end position="50"/>
    </location>
</feature>
<feature type="region of interest" description="Disordered" evidence="3">
    <location>
        <begin position="124"/>
        <end position="159"/>
    </location>
</feature>
<feature type="region of interest" description="Disordered" evidence="3">
    <location>
        <begin position="209"/>
        <end position="279"/>
    </location>
</feature>
<feature type="region of interest" description="Disordered" evidence="3">
    <location>
        <begin position="294"/>
        <end position="316"/>
    </location>
</feature>
<feature type="region of interest" description="Disordered" evidence="3">
    <location>
        <begin position="366"/>
        <end position="391"/>
    </location>
</feature>
<feature type="compositionally biased region" description="Basic and acidic residues" evidence="3">
    <location>
        <begin position="127"/>
        <end position="146"/>
    </location>
</feature>
<feature type="compositionally biased region" description="Low complexity" evidence="3">
    <location>
        <begin position="150"/>
        <end position="159"/>
    </location>
</feature>
<feature type="compositionally biased region" description="Polar residues" evidence="3">
    <location>
        <begin position="248"/>
        <end position="257"/>
    </location>
</feature>
<feature type="compositionally biased region" description="Polar residues" evidence="3">
    <location>
        <begin position="269"/>
        <end position="279"/>
    </location>
</feature>
<feature type="compositionally biased region" description="Polar residues" evidence="3">
    <location>
        <begin position="300"/>
        <end position="315"/>
    </location>
</feature>
<feature type="compositionally biased region" description="Polar residues" evidence="3">
    <location>
        <begin position="366"/>
        <end position="385"/>
    </location>
</feature>
<feature type="splice variant" id="VSP_035553" description="In isoform 3." evidence="5">
    <location>
        <begin position="185"/>
        <end position="226"/>
    </location>
</feature>
<feature type="splice variant" id="VSP_035554" description="In isoform 2." evidence="4">
    <location>
        <position position="469"/>
    </location>
</feature>
<sequence length="649" mass="71344">MMGSKREEERNEKIIRGLMKLPPNRRCINCNSLGPQYVCTTFWTFVCMACSGIHREFTHRVKSVSMSKFTSKEVEVLQNGGNQRAREIYLKNWDHQRQRLPENSNAERVREFIKNVYVQKKYAGANDADKPSKDSQDHVSSEDMTRRANSYHSYSQSPPYDYQYEERRYGKIPLGFTGKSASVKGLHAKASSFVYSPGRFSDHMFEDQFSNEDSAPRASDYSVSSAGDPFRSDIQSPNFQQEAEFRSPQFQHSNAPPSENLFPGRQHQRTTSSGSVRSVDSNFMSIKSYTSGGLGEAVSESRQNTGSQQGKTSNHVPLVAESTKAPIDLFQLPGAPVAQSVDTFQPSIAPRSPPVNLQQAPQTYSFTPANSFAGNLGQQPTSRPSELSAPKNEGWASFDNPMPAAKSTNVITSPGDFQLELKIEEILQPSTSMQLPPYPSTVDQHALSIPSPWQEDLSNVLKDVVDNPQPWNAFPDSIEANPLDSSRNIHQQVDGASTSSYNTDHQHLESQVLEELSNDGTQTTRIPAGSSAFGFPGNIGMAPSYSEEAWQHVNEQKSANPFDLPYDSEFDSNDMFLDMSSLQGALPDIQTPQAFLNGVSQPWLAADSVPSYLPAPAVAQGGLAYMAGQASTNSAAQGPVAFTGGNPFA</sequence>
<keyword id="KW-0025">Alternative splicing</keyword>
<keyword id="KW-0343">GTPase activation</keyword>
<keyword id="KW-0479">Metal-binding</keyword>
<keyword id="KW-1185">Reference proteome</keyword>
<keyword id="KW-0862">Zinc</keyword>
<keyword id="KW-0863">Zinc-finger</keyword>
<accession>Q8RXE7</accession>
<accession>Q67YQ3</accession>
<accession>Q9FRR6</accession>
<accession>Q9FRR7</accession>
<accession>Q9FVH3</accession>
<protein>
    <recommendedName>
        <fullName>Probable ADP-ribosylation factor GTPase-activating protein AGD14</fullName>
        <shortName>ARF GAP AGD14</shortName>
    </recommendedName>
    <alternativeName>
        <fullName>Protein ARF-GAP DOMAIN 14</fullName>
        <shortName>AtAGD14</shortName>
    </alternativeName>
    <alternativeName>
        <fullName>Protein ZIGA4</fullName>
    </alternativeName>
</protein>